<gene>
    <name type="primary">dnaQ</name>
    <name type="synonym">mutD</name>
    <name type="ordered locus">STM0264</name>
</gene>
<protein>
    <recommendedName>
        <fullName>DNA polymerase III subunit epsilon</fullName>
        <ecNumber>2.7.7.7</ecNumber>
    </recommendedName>
</protein>
<reference key="1">
    <citation type="journal article" date="1997" name="FEBS Lett.">
        <title>Evolution of dnaQ, the gene encoding the editing 3' to 5' exonuclease subunit of DNA polymerase III holoenzyme in Gram-negative bacteria.</title>
        <authorList>
            <person name="Huang Y."/>
            <person name="Braithwaite D.K."/>
            <person name="Ito J."/>
        </authorList>
    </citation>
    <scope>NUCLEOTIDE SEQUENCE [GENOMIC DNA]</scope>
</reference>
<reference key="2">
    <citation type="journal article" date="2001" name="Nature">
        <title>Complete genome sequence of Salmonella enterica serovar Typhimurium LT2.</title>
        <authorList>
            <person name="McClelland M."/>
            <person name="Sanderson K.E."/>
            <person name="Spieth J."/>
            <person name="Clifton S.W."/>
            <person name="Latreille P."/>
            <person name="Courtney L."/>
            <person name="Porwollik S."/>
            <person name="Ali J."/>
            <person name="Dante M."/>
            <person name="Du F."/>
            <person name="Hou S."/>
            <person name="Layman D."/>
            <person name="Leonard S."/>
            <person name="Nguyen C."/>
            <person name="Scott K."/>
            <person name="Holmes A."/>
            <person name="Grewal N."/>
            <person name="Mulvaney E."/>
            <person name="Ryan E."/>
            <person name="Sun H."/>
            <person name="Florea L."/>
            <person name="Miller W."/>
            <person name="Stoneking T."/>
            <person name="Nhan M."/>
            <person name="Waterston R."/>
            <person name="Wilson R.K."/>
        </authorList>
    </citation>
    <scope>NUCLEOTIDE SEQUENCE [LARGE SCALE GENOMIC DNA]</scope>
    <source>
        <strain>LT2 / SGSC1412 / ATCC 700720</strain>
    </source>
</reference>
<reference key="3">
    <citation type="journal article" date="1989" name="J. Bacteriol.">
        <title>Isolation and characterization of mutants with deletions in dnaQ, the gene for the editing subunit of DNA polymerase III in Salmonella typhimurium.</title>
        <authorList>
            <person name="Lancy E.D."/>
            <person name="Lifsics M.R."/>
            <person name="Kehres D.G."/>
            <person name="Maurer R."/>
        </authorList>
    </citation>
    <scope>NUCLEOTIDE SEQUENCE [GENOMIC DNA] OF 1-100 AND 119-132</scope>
</reference>
<keyword id="KW-0235">DNA replication</keyword>
<keyword id="KW-0239">DNA-directed DNA polymerase</keyword>
<keyword id="KW-0269">Exonuclease</keyword>
<keyword id="KW-0378">Hydrolase</keyword>
<keyword id="KW-0460">Magnesium</keyword>
<keyword id="KW-0464">Manganese</keyword>
<keyword id="KW-0479">Metal-binding</keyword>
<keyword id="KW-0540">Nuclease</keyword>
<keyword id="KW-0548">Nucleotidyltransferase</keyword>
<keyword id="KW-1185">Reference proteome</keyword>
<keyword id="KW-0808">Transferase</keyword>
<organism>
    <name type="scientific">Salmonella typhimurium (strain LT2 / SGSC1412 / ATCC 700720)</name>
    <dbReference type="NCBI Taxonomy" id="99287"/>
    <lineage>
        <taxon>Bacteria</taxon>
        <taxon>Pseudomonadati</taxon>
        <taxon>Pseudomonadota</taxon>
        <taxon>Gammaproteobacteria</taxon>
        <taxon>Enterobacterales</taxon>
        <taxon>Enterobacteriaceae</taxon>
        <taxon>Salmonella</taxon>
    </lineage>
</organism>
<dbReference type="EC" id="2.7.7.7"/>
<dbReference type="EMBL" id="U44090">
    <property type="protein sequence ID" value="AAA86422.1"/>
    <property type="molecule type" value="Genomic_DNA"/>
</dbReference>
<dbReference type="EMBL" id="U77465">
    <property type="protein sequence ID" value="AAC44792.1"/>
    <property type="molecule type" value="Genomic_DNA"/>
</dbReference>
<dbReference type="EMBL" id="AE006468">
    <property type="protein sequence ID" value="AAL19221.1"/>
    <property type="molecule type" value="Genomic_DNA"/>
</dbReference>
<dbReference type="EMBL" id="M26045">
    <property type="protein sequence ID" value="AAA27192.2"/>
    <property type="molecule type" value="Genomic_DNA"/>
</dbReference>
<dbReference type="RefSeq" id="NP_459262.1">
    <property type="nucleotide sequence ID" value="NC_003197.2"/>
</dbReference>
<dbReference type="RefSeq" id="WP_001670675.1">
    <property type="nucleotide sequence ID" value="NC_003197.2"/>
</dbReference>
<dbReference type="SMR" id="P0A1G9"/>
<dbReference type="STRING" id="99287.STM0264"/>
<dbReference type="PaxDb" id="99287-STM0264"/>
<dbReference type="GeneID" id="1251782"/>
<dbReference type="KEGG" id="stm:STM0264"/>
<dbReference type="PATRIC" id="fig|99287.12.peg.273"/>
<dbReference type="HOGENOM" id="CLU_047806_2_0_6"/>
<dbReference type="OMA" id="FHVYLNP"/>
<dbReference type="PhylomeDB" id="P0A1G9"/>
<dbReference type="BioCyc" id="SENT99287:STM0264-MONOMER"/>
<dbReference type="Proteomes" id="UP000001014">
    <property type="component" value="Chromosome"/>
</dbReference>
<dbReference type="GO" id="GO:0005829">
    <property type="term" value="C:cytosol"/>
    <property type="evidence" value="ECO:0000318"/>
    <property type="project" value="GO_Central"/>
</dbReference>
<dbReference type="GO" id="GO:0008408">
    <property type="term" value="F:3'-5' exonuclease activity"/>
    <property type="evidence" value="ECO:0000318"/>
    <property type="project" value="GO_Central"/>
</dbReference>
<dbReference type="GO" id="GO:0003677">
    <property type="term" value="F:DNA binding"/>
    <property type="evidence" value="ECO:0007669"/>
    <property type="project" value="InterPro"/>
</dbReference>
<dbReference type="GO" id="GO:0003887">
    <property type="term" value="F:DNA-directed DNA polymerase activity"/>
    <property type="evidence" value="ECO:0007669"/>
    <property type="project" value="UniProtKB-KW"/>
</dbReference>
<dbReference type="GO" id="GO:0046872">
    <property type="term" value="F:metal ion binding"/>
    <property type="evidence" value="ECO:0007669"/>
    <property type="project" value="UniProtKB-KW"/>
</dbReference>
<dbReference type="GO" id="GO:0045004">
    <property type="term" value="P:DNA replication proofreading"/>
    <property type="evidence" value="ECO:0000318"/>
    <property type="project" value="GO_Central"/>
</dbReference>
<dbReference type="CDD" id="cd06131">
    <property type="entry name" value="DNA_pol_III_epsilon_Ecoli_like"/>
    <property type="match status" value="1"/>
</dbReference>
<dbReference type="FunFam" id="3.30.420.10:FF:000012">
    <property type="entry name" value="DNA polymerase III subunit epsilon"/>
    <property type="match status" value="1"/>
</dbReference>
<dbReference type="Gene3D" id="3.20.20.140">
    <property type="entry name" value="Metal-dependent hydrolases"/>
    <property type="match status" value="1"/>
</dbReference>
<dbReference type="Gene3D" id="3.30.420.10">
    <property type="entry name" value="Ribonuclease H-like superfamily/Ribonuclease H"/>
    <property type="match status" value="1"/>
</dbReference>
<dbReference type="InterPro" id="IPR006054">
    <property type="entry name" value="DnaQ"/>
</dbReference>
<dbReference type="InterPro" id="IPR006309">
    <property type="entry name" value="DnaQ_proteo"/>
</dbReference>
<dbReference type="InterPro" id="IPR013520">
    <property type="entry name" value="Exonuclease_RNaseT/DNA_pol3"/>
</dbReference>
<dbReference type="InterPro" id="IPR012337">
    <property type="entry name" value="RNaseH-like_sf"/>
</dbReference>
<dbReference type="InterPro" id="IPR036397">
    <property type="entry name" value="RNaseH_sf"/>
</dbReference>
<dbReference type="NCBIfam" id="TIGR00573">
    <property type="entry name" value="dnaq"/>
    <property type="match status" value="1"/>
</dbReference>
<dbReference type="NCBIfam" id="TIGR01406">
    <property type="entry name" value="dnaQ_proteo"/>
    <property type="match status" value="1"/>
</dbReference>
<dbReference type="NCBIfam" id="NF004316">
    <property type="entry name" value="PRK05711.1"/>
    <property type="match status" value="1"/>
</dbReference>
<dbReference type="PANTHER" id="PTHR30231">
    <property type="entry name" value="DNA POLYMERASE III SUBUNIT EPSILON"/>
    <property type="match status" value="1"/>
</dbReference>
<dbReference type="PANTHER" id="PTHR30231:SF41">
    <property type="entry name" value="DNA POLYMERASE III SUBUNIT EPSILON"/>
    <property type="match status" value="1"/>
</dbReference>
<dbReference type="Pfam" id="PF00929">
    <property type="entry name" value="RNase_T"/>
    <property type="match status" value="1"/>
</dbReference>
<dbReference type="SMART" id="SM00479">
    <property type="entry name" value="EXOIII"/>
    <property type="match status" value="1"/>
</dbReference>
<dbReference type="SUPFAM" id="SSF53098">
    <property type="entry name" value="Ribonuclease H-like"/>
    <property type="match status" value="1"/>
</dbReference>
<accession>P0A1G9</accession>
<accession>P14566</accession>
<accession>Q56055</accession>
<comment type="function">
    <text evidence="1">DNA polymerase III is a complex, multichain enzyme responsible for most of the replicative synthesis in bacteria. The epsilon subunit contains the editing function and is a proofreading 3'-5' exonuclease (By similarity).</text>
</comment>
<comment type="catalytic activity">
    <reaction>
        <text>DNA(n) + a 2'-deoxyribonucleoside 5'-triphosphate = DNA(n+1) + diphosphate</text>
        <dbReference type="Rhea" id="RHEA:22508"/>
        <dbReference type="Rhea" id="RHEA-COMP:17339"/>
        <dbReference type="Rhea" id="RHEA-COMP:17340"/>
        <dbReference type="ChEBI" id="CHEBI:33019"/>
        <dbReference type="ChEBI" id="CHEBI:61560"/>
        <dbReference type="ChEBI" id="CHEBI:173112"/>
        <dbReference type="EC" id="2.7.7.7"/>
    </reaction>
</comment>
<comment type="cofactor">
    <cofactor evidence="1">
        <name>Mg(2+)</name>
        <dbReference type="ChEBI" id="CHEBI:18420"/>
    </cofactor>
    <cofactor evidence="1">
        <name>Mn(2+)</name>
        <dbReference type="ChEBI" id="CHEBI:29035"/>
    </cofactor>
    <text evidence="1">Binds 2 divalent metal cations. Magnesium or manganese.</text>
</comment>
<comment type="subunit">
    <text evidence="1">The DNA polymerase holoenzyme is a complex that contains 10 different types of subunits. These subunits are organized into 3 functionally essential subassemblies: the pol III core, the beta sliding clamp processivity factor and the clamp-loading complex. The pol III core (subunits alpha,epsilon and theta) contains the polymerase and the 3'-5' exonuclease proofreading activities. The polymerase is tethered to the template via the sliding clamp processivity factor. The clamp-loading complex assembles the beta processivity factor onto the primer template and plays a central role in the organization and communication at the replication fork. This complex contains delta, delta', psi and chi, and copies of either or both of two different DnaX proteins, gamma and tau. The composition of the holoenzyme is, therefore: (alpha,epsilon,theta)[2]-(gamma/tau)[3]-delta,delta', psi,chi-beta[4] (By similarity).</text>
</comment>
<evidence type="ECO:0000250" key="1"/>
<proteinExistence type="inferred from homology"/>
<sequence>MSTAITRQIVLDTETTGMNQIGAHYEGHKIIEIGAVEVINRRLTGNNFHVYLKPDRLVDPEAFGVHGIADEFLLDKPVFADVVDEFLDYIRGAELVIHNASFDIGFMDYEFGLLKRDIPKTNTFCKVTDSLALARKMFPGKRNSLDALCSRYEIDNSKRTLHGALLDAQILAEVYLAMTGGQTSMTFAMEGETQRQQGEATIQRIVRQASRLRVVFASEEELAAHESRLDLVQKKGGSCLWRA</sequence>
<feature type="chain" id="PRO_0000105485" description="DNA polymerase III subunit epsilon">
    <location>
        <begin position="1"/>
        <end position="243"/>
    </location>
</feature>
<feature type="active site" description="Proton acceptor" evidence="1">
    <location>
        <position position="162"/>
    </location>
</feature>
<feature type="binding site" evidence="1">
    <location>
        <position position="12"/>
    </location>
    <ligand>
        <name>a divalent metal cation</name>
        <dbReference type="ChEBI" id="CHEBI:60240"/>
        <label>1</label>
        <note>catalytic</note>
    </ligand>
</feature>
<feature type="binding site" evidence="1">
    <location>
        <position position="12"/>
    </location>
    <ligand>
        <name>a divalent metal cation</name>
        <dbReference type="ChEBI" id="CHEBI:60240"/>
        <label>2</label>
        <note>catalytic</note>
    </ligand>
</feature>
<feature type="binding site" evidence="1">
    <location>
        <position position="12"/>
    </location>
    <ligand>
        <name>substrate</name>
    </ligand>
</feature>
<feature type="binding site" evidence="1">
    <location>
        <position position="14"/>
    </location>
    <ligand>
        <name>a divalent metal cation</name>
        <dbReference type="ChEBI" id="CHEBI:60240"/>
        <label>1</label>
        <note>catalytic</note>
    </ligand>
</feature>
<feature type="binding site" evidence="1">
    <location>
        <position position="14"/>
    </location>
    <ligand>
        <name>substrate</name>
    </ligand>
</feature>
<feature type="binding site" evidence="1">
    <location>
        <position position="61"/>
    </location>
    <ligand>
        <name>substrate</name>
    </ligand>
</feature>
<feature type="binding site" evidence="1">
    <location>
        <position position="66"/>
    </location>
    <ligand>
        <name>substrate</name>
    </ligand>
</feature>
<feature type="binding site" evidence="1">
    <location>
        <position position="167"/>
    </location>
    <ligand>
        <name>a divalent metal cation</name>
        <dbReference type="ChEBI" id="CHEBI:60240"/>
        <label>1</label>
        <note>catalytic</note>
    </ligand>
</feature>
<feature type="binding site" evidence="1">
    <location>
        <position position="167"/>
    </location>
    <ligand>
        <name>substrate</name>
    </ligand>
</feature>
<name>DPO3E_SALTY</name>